<sequence>MAKVNLIESPYSLLQLKGIGPKKIEVLQQLNIHTVEDLVLYLPTRYEDNTVIDLNQAEDQSNVTIEGQVYTAPVVAFFGRNKSKLTVHLMVNNIAVKCIFFNQPYLKKKIELNQTITVKGKWNRVKQEITGNRVFLNSQGTQTQENADVQLEPVYRIKEGIKQKQIRDQIRQALNDVTIHEWLTDELREKYKLETLDFTLNTLHHPKSKEDLLRARRTYAFTELFLFELRMQWLNRLEKSSDEAIEIDYDLDQVKSFIDRLPFELTEAQKSSVNEIFRDLKAPIRMHRLLQGDVGSGKTVVAAICMYALKTAGYQSALMVPTEILAEQHAESLIALFGDSMNVALLTGSVKGKKRKILLEQLENRTIDCLIGTHALIQDDVIFHNVGLVITDEQHRFGVNQRQLLREKGAMTNVLFMTATPIPRTLAISVFGEMDVSSIKQLPKGRKPIITTWAKHEQYDKVLMQMTSELKKGRQAYVICPLIESSEHLEDVQNVVALYESLQQYYGVSRVGLLHGKLSADEKDEVMQKFSNHEIDVLVSTTVVEVGVNVPNATFMMIYDADRFGLSTLHQLRGRVGRSDQQSYCVLIASPKTETGIERMTIMTQTTDGFELSERDLEMRGPGDFFGVKQSGLPDFLVANLVEDYRMLEVARDEAAELIQSGVFFENTYQHLRHFVEENLLHRSFD</sequence>
<accession>Q6GHK8</accession>
<feature type="chain" id="PRO_0000102153" description="ATP-dependent DNA helicase RecG">
    <location>
        <begin position="1"/>
        <end position="686"/>
    </location>
</feature>
<feature type="domain" description="Helicase ATP-binding" evidence="3">
    <location>
        <begin position="279"/>
        <end position="439"/>
    </location>
</feature>
<feature type="domain" description="Helicase C-terminal" evidence="4">
    <location>
        <begin position="462"/>
        <end position="618"/>
    </location>
</feature>
<feature type="region of interest" description="Wedge domain" evidence="2">
    <location>
        <begin position="50"/>
        <end position="149"/>
    </location>
</feature>
<feature type="short sequence motif" description="DEAH box" evidence="3">
    <location>
        <begin position="392"/>
        <end position="395"/>
    </location>
</feature>
<feature type="binding site" evidence="3">
    <location>
        <begin position="292"/>
        <end position="299"/>
    </location>
    <ligand>
        <name>ATP</name>
        <dbReference type="ChEBI" id="CHEBI:30616"/>
    </ligand>
</feature>
<name>RECG_STAAR</name>
<comment type="function">
    <text evidence="1">Plays a critical role in recombination and DNA repair. Helps process Holliday junction intermediates to mature products by catalyzing branch migration. Has replication fork regression activity, unwinds stalled or blocked replication forks to make a HJ that can be resolved. Has a DNA unwinding activity characteristic of a DNA helicase with 3'-5' polarity (By similarity).</text>
</comment>
<comment type="catalytic activity">
    <reaction evidence="1">
        <text>Couples ATP hydrolysis with the unwinding of duplex DNA by translocating in the 3'-5' direction.</text>
        <dbReference type="EC" id="5.6.2.4"/>
    </reaction>
</comment>
<comment type="catalytic activity">
    <reaction evidence="1">
        <text>ATP + H2O = ADP + phosphate + H(+)</text>
        <dbReference type="Rhea" id="RHEA:13065"/>
        <dbReference type="ChEBI" id="CHEBI:15377"/>
        <dbReference type="ChEBI" id="CHEBI:15378"/>
        <dbReference type="ChEBI" id="CHEBI:30616"/>
        <dbReference type="ChEBI" id="CHEBI:43474"/>
        <dbReference type="ChEBI" id="CHEBI:456216"/>
        <dbReference type="EC" id="5.6.2.4"/>
    </reaction>
</comment>
<comment type="subunit">
    <text evidence="2">Monomer (By similarity).</text>
</comment>
<comment type="domain">
    <text evidence="2">The wedge domain within the N-terminus inserts into the replication fork junction, where the lagging and leading strand split (By similarity).</text>
</comment>
<comment type="similarity">
    <text evidence="5">Belongs to the helicase family. RecG subfamily.</text>
</comment>
<proteinExistence type="inferred from homology"/>
<reference key="1">
    <citation type="journal article" date="2004" name="Proc. Natl. Acad. Sci. U.S.A.">
        <title>Complete genomes of two clinical Staphylococcus aureus strains: evidence for the rapid evolution of virulence and drug resistance.</title>
        <authorList>
            <person name="Holden M.T.G."/>
            <person name="Feil E.J."/>
            <person name="Lindsay J.A."/>
            <person name="Peacock S.J."/>
            <person name="Day N.P.J."/>
            <person name="Enright M.C."/>
            <person name="Foster T.J."/>
            <person name="Moore C.E."/>
            <person name="Hurst L."/>
            <person name="Atkin R."/>
            <person name="Barron A."/>
            <person name="Bason N."/>
            <person name="Bentley S.D."/>
            <person name="Chillingworth C."/>
            <person name="Chillingworth T."/>
            <person name="Churcher C."/>
            <person name="Clark L."/>
            <person name="Corton C."/>
            <person name="Cronin A."/>
            <person name="Doggett J."/>
            <person name="Dowd L."/>
            <person name="Feltwell T."/>
            <person name="Hance Z."/>
            <person name="Harris B."/>
            <person name="Hauser H."/>
            <person name="Holroyd S."/>
            <person name="Jagels K."/>
            <person name="James K.D."/>
            <person name="Lennard N."/>
            <person name="Line A."/>
            <person name="Mayes R."/>
            <person name="Moule S."/>
            <person name="Mungall K."/>
            <person name="Ormond D."/>
            <person name="Quail M.A."/>
            <person name="Rabbinowitsch E."/>
            <person name="Rutherford K.M."/>
            <person name="Sanders M."/>
            <person name="Sharp S."/>
            <person name="Simmonds M."/>
            <person name="Stevens K."/>
            <person name="Whitehead S."/>
            <person name="Barrell B.G."/>
            <person name="Spratt B.G."/>
            <person name="Parkhill J."/>
        </authorList>
    </citation>
    <scope>NUCLEOTIDE SEQUENCE [LARGE SCALE GENOMIC DNA]</scope>
    <source>
        <strain>MRSA252</strain>
    </source>
</reference>
<evidence type="ECO:0000250" key="1">
    <source>
        <dbReference type="UniProtKB" id="P24230"/>
    </source>
</evidence>
<evidence type="ECO:0000250" key="2">
    <source>
        <dbReference type="UniProtKB" id="Q9WY48"/>
    </source>
</evidence>
<evidence type="ECO:0000255" key="3">
    <source>
        <dbReference type="PROSITE-ProRule" id="PRU00541"/>
    </source>
</evidence>
<evidence type="ECO:0000255" key="4">
    <source>
        <dbReference type="PROSITE-ProRule" id="PRU00542"/>
    </source>
</evidence>
<evidence type="ECO:0000305" key="5"/>
<gene>
    <name type="primary">recG</name>
    <name type="ordered locus">SAR1203</name>
</gene>
<dbReference type="EC" id="5.6.2.4" evidence="1"/>
<dbReference type="EMBL" id="BX571856">
    <property type="protein sequence ID" value="CAG40205.1"/>
    <property type="molecule type" value="Genomic_DNA"/>
</dbReference>
<dbReference type="RefSeq" id="WP_001151515.1">
    <property type="nucleotide sequence ID" value="NC_002952.2"/>
</dbReference>
<dbReference type="SMR" id="Q6GHK8"/>
<dbReference type="KEGG" id="sar:SAR1203"/>
<dbReference type="HOGENOM" id="CLU_005122_7_1_9"/>
<dbReference type="Proteomes" id="UP000000596">
    <property type="component" value="Chromosome"/>
</dbReference>
<dbReference type="GO" id="GO:0005524">
    <property type="term" value="F:ATP binding"/>
    <property type="evidence" value="ECO:0007669"/>
    <property type="project" value="UniProtKB-KW"/>
</dbReference>
<dbReference type="GO" id="GO:0016887">
    <property type="term" value="F:ATP hydrolysis activity"/>
    <property type="evidence" value="ECO:0007669"/>
    <property type="project" value="RHEA"/>
</dbReference>
<dbReference type="GO" id="GO:0003677">
    <property type="term" value="F:DNA binding"/>
    <property type="evidence" value="ECO:0007669"/>
    <property type="project" value="UniProtKB-KW"/>
</dbReference>
<dbReference type="GO" id="GO:0003678">
    <property type="term" value="F:DNA helicase activity"/>
    <property type="evidence" value="ECO:0007669"/>
    <property type="project" value="InterPro"/>
</dbReference>
<dbReference type="GO" id="GO:0006310">
    <property type="term" value="P:DNA recombination"/>
    <property type="evidence" value="ECO:0007669"/>
    <property type="project" value="UniProtKB-KW"/>
</dbReference>
<dbReference type="GO" id="GO:0006281">
    <property type="term" value="P:DNA repair"/>
    <property type="evidence" value="ECO:0007669"/>
    <property type="project" value="UniProtKB-KW"/>
</dbReference>
<dbReference type="CDD" id="cd17992">
    <property type="entry name" value="DEXHc_RecG"/>
    <property type="match status" value="1"/>
</dbReference>
<dbReference type="CDD" id="cd04488">
    <property type="entry name" value="RecG_wedge_OBF"/>
    <property type="match status" value="1"/>
</dbReference>
<dbReference type="Gene3D" id="2.40.50.140">
    <property type="entry name" value="Nucleic acid-binding proteins"/>
    <property type="match status" value="1"/>
</dbReference>
<dbReference type="Gene3D" id="3.40.50.300">
    <property type="entry name" value="P-loop containing nucleotide triphosphate hydrolases"/>
    <property type="match status" value="2"/>
</dbReference>
<dbReference type="InterPro" id="IPR004609">
    <property type="entry name" value="ATP-dep_DNA_helicase_RecG"/>
</dbReference>
<dbReference type="InterPro" id="IPR011545">
    <property type="entry name" value="DEAD/DEAH_box_helicase_dom"/>
</dbReference>
<dbReference type="InterPro" id="IPR014001">
    <property type="entry name" value="Helicase_ATP-bd"/>
</dbReference>
<dbReference type="InterPro" id="IPR001650">
    <property type="entry name" value="Helicase_C-like"/>
</dbReference>
<dbReference type="InterPro" id="IPR012340">
    <property type="entry name" value="NA-bd_OB-fold"/>
</dbReference>
<dbReference type="InterPro" id="IPR027417">
    <property type="entry name" value="P-loop_NTPase"/>
</dbReference>
<dbReference type="InterPro" id="IPR047112">
    <property type="entry name" value="RecG/Mfd"/>
</dbReference>
<dbReference type="InterPro" id="IPR045562">
    <property type="entry name" value="RecG_dom3_C"/>
</dbReference>
<dbReference type="InterPro" id="IPR033454">
    <property type="entry name" value="RecG_wedge"/>
</dbReference>
<dbReference type="NCBIfam" id="NF008165">
    <property type="entry name" value="PRK10917.1-3"/>
    <property type="match status" value="1"/>
</dbReference>
<dbReference type="NCBIfam" id="NF008168">
    <property type="entry name" value="PRK10917.2-2"/>
    <property type="match status" value="1"/>
</dbReference>
<dbReference type="NCBIfam" id="TIGR00643">
    <property type="entry name" value="recG"/>
    <property type="match status" value="1"/>
</dbReference>
<dbReference type="PANTHER" id="PTHR47964">
    <property type="entry name" value="ATP-DEPENDENT DNA HELICASE HOMOLOG RECG, CHLOROPLASTIC"/>
    <property type="match status" value="1"/>
</dbReference>
<dbReference type="PANTHER" id="PTHR47964:SF1">
    <property type="entry name" value="ATP-DEPENDENT DNA HELICASE HOMOLOG RECG, CHLOROPLASTIC"/>
    <property type="match status" value="1"/>
</dbReference>
<dbReference type="Pfam" id="PF00270">
    <property type="entry name" value="DEAD"/>
    <property type="match status" value="1"/>
</dbReference>
<dbReference type="Pfam" id="PF00271">
    <property type="entry name" value="Helicase_C"/>
    <property type="match status" value="1"/>
</dbReference>
<dbReference type="Pfam" id="PF19833">
    <property type="entry name" value="RecG_dom3_C"/>
    <property type="match status" value="1"/>
</dbReference>
<dbReference type="Pfam" id="PF17191">
    <property type="entry name" value="RecG_wedge"/>
    <property type="match status" value="1"/>
</dbReference>
<dbReference type="SMART" id="SM00487">
    <property type="entry name" value="DEXDc"/>
    <property type="match status" value="1"/>
</dbReference>
<dbReference type="SMART" id="SM00490">
    <property type="entry name" value="HELICc"/>
    <property type="match status" value="1"/>
</dbReference>
<dbReference type="SUPFAM" id="SSF50249">
    <property type="entry name" value="Nucleic acid-binding proteins"/>
    <property type="match status" value="1"/>
</dbReference>
<dbReference type="SUPFAM" id="SSF52540">
    <property type="entry name" value="P-loop containing nucleoside triphosphate hydrolases"/>
    <property type="match status" value="2"/>
</dbReference>
<dbReference type="PROSITE" id="PS51192">
    <property type="entry name" value="HELICASE_ATP_BIND_1"/>
    <property type="match status" value="1"/>
</dbReference>
<dbReference type="PROSITE" id="PS51194">
    <property type="entry name" value="HELICASE_CTER"/>
    <property type="match status" value="1"/>
</dbReference>
<keyword id="KW-0067">ATP-binding</keyword>
<keyword id="KW-0227">DNA damage</keyword>
<keyword id="KW-0233">DNA recombination</keyword>
<keyword id="KW-0234">DNA repair</keyword>
<keyword id="KW-0238">DNA-binding</keyword>
<keyword id="KW-0347">Helicase</keyword>
<keyword id="KW-0378">Hydrolase</keyword>
<keyword id="KW-0413">Isomerase</keyword>
<keyword id="KW-0547">Nucleotide-binding</keyword>
<protein>
    <recommendedName>
        <fullName>ATP-dependent DNA helicase RecG</fullName>
        <ecNumber evidence="1">5.6.2.4</ecNumber>
    </recommendedName>
    <alternativeName>
        <fullName>DNA branch migration protein RecG</fullName>
    </alternativeName>
    <alternativeName>
        <fullName>Probable DNA 3'-5' helicase RecG</fullName>
    </alternativeName>
</protein>
<organism>
    <name type="scientific">Staphylococcus aureus (strain MRSA252)</name>
    <dbReference type="NCBI Taxonomy" id="282458"/>
    <lineage>
        <taxon>Bacteria</taxon>
        <taxon>Bacillati</taxon>
        <taxon>Bacillota</taxon>
        <taxon>Bacilli</taxon>
        <taxon>Bacillales</taxon>
        <taxon>Staphylococcaceae</taxon>
        <taxon>Staphylococcus</taxon>
    </lineage>
</organism>